<proteinExistence type="inferred from homology"/>
<evidence type="ECO:0000255" key="1">
    <source>
        <dbReference type="HAMAP-Rule" id="MF_01571"/>
    </source>
</evidence>
<name>SYP_AERPE</name>
<sequence length="485" mass="56185">MLGPPSREKWSSDFPRWFDWVIETAEVYDYGRYPVKGMGVWMPYGFQIRRRVLEVVRGLLDSTGHEEVLFPLLIPEHLLRRESEHIRGFEGEVYWVTHGGREELDVKLALRPTSETSITYMETFWIKSYRQLPKKYYQVVSIFRYETKATRPMIRLREVTTFKEAHTVHESFEDAERQVLEAIEVYKAIFDRLLIPYVISKRPEWDKFAGALYTIAFDTIMPDGRALQIGTVHHLGQSFTRAFDFRIQMRDERLDHPWQTSYGVSDRVVASLIAVHGDDRGLVIPPSVAPIQVVVIPITPGDEEKRGKVLTYTAKAAEALEKAGLRVHVDDREWERPGAKFYYWEAKGVPIRVEIGLREAEQDTLTIARRDTLEKTEVPLGEAGNRIRELMAQIESSMRERAKSFFGERLLRTESLEEARDWVEGRRGIAEIPWCGRESCGLEMEERVNGKVLGTPWPEEPVEEGKRCPLCGRPAVAWIRLAKTY</sequence>
<keyword id="KW-0030">Aminoacyl-tRNA synthetase</keyword>
<keyword id="KW-0067">ATP-binding</keyword>
<keyword id="KW-0963">Cytoplasm</keyword>
<keyword id="KW-0436">Ligase</keyword>
<keyword id="KW-0547">Nucleotide-binding</keyword>
<keyword id="KW-0648">Protein biosynthesis</keyword>
<keyword id="KW-1185">Reference proteome</keyword>
<dbReference type="EC" id="6.1.1.15" evidence="1"/>
<dbReference type="EMBL" id="BA000002">
    <property type="protein sequence ID" value="BAA81340.1"/>
    <property type="molecule type" value="Genomic_DNA"/>
</dbReference>
<dbReference type="PIR" id="D72460">
    <property type="entry name" value="D72460"/>
</dbReference>
<dbReference type="RefSeq" id="WP_010866941.1">
    <property type="nucleotide sequence ID" value="NC_000854.2"/>
</dbReference>
<dbReference type="SMR" id="Q9Y9G0"/>
<dbReference type="STRING" id="272557.APE_2328"/>
<dbReference type="EnsemblBacteria" id="BAA81340">
    <property type="protein sequence ID" value="BAA81340"/>
    <property type="gene ID" value="APE_2328"/>
</dbReference>
<dbReference type="GeneID" id="1445351"/>
<dbReference type="KEGG" id="ape:APE_2328"/>
<dbReference type="PATRIC" id="fig|272557.25.peg.1552"/>
<dbReference type="eggNOG" id="arCOG00402">
    <property type="taxonomic scope" value="Archaea"/>
</dbReference>
<dbReference type="BRENDA" id="6.1.1.15">
    <property type="organism ID" value="171"/>
</dbReference>
<dbReference type="Proteomes" id="UP000002518">
    <property type="component" value="Chromosome"/>
</dbReference>
<dbReference type="GO" id="GO:0017101">
    <property type="term" value="C:aminoacyl-tRNA synthetase multienzyme complex"/>
    <property type="evidence" value="ECO:0007669"/>
    <property type="project" value="TreeGrafter"/>
</dbReference>
<dbReference type="GO" id="GO:0005737">
    <property type="term" value="C:cytoplasm"/>
    <property type="evidence" value="ECO:0007669"/>
    <property type="project" value="UniProtKB-SubCell"/>
</dbReference>
<dbReference type="GO" id="GO:0005524">
    <property type="term" value="F:ATP binding"/>
    <property type="evidence" value="ECO:0007669"/>
    <property type="project" value="UniProtKB-UniRule"/>
</dbReference>
<dbReference type="GO" id="GO:0004827">
    <property type="term" value="F:proline-tRNA ligase activity"/>
    <property type="evidence" value="ECO:0007669"/>
    <property type="project" value="UniProtKB-UniRule"/>
</dbReference>
<dbReference type="GO" id="GO:0006433">
    <property type="term" value="P:prolyl-tRNA aminoacylation"/>
    <property type="evidence" value="ECO:0007669"/>
    <property type="project" value="UniProtKB-UniRule"/>
</dbReference>
<dbReference type="CDD" id="cd00862">
    <property type="entry name" value="ProRS_anticodon_zinc"/>
    <property type="match status" value="1"/>
</dbReference>
<dbReference type="CDD" id="cd00778">
    <property type="entry name" value="ProRS_core_arch_euk"/>
    <property type="match status" value="1"/>
</dbReference>
<dbReference type="FunFam" id="3.30.930.10:FF:000037">
    <property type="entry name" value="Proline--tRNA ligase"/>
    <property type="match status" value="1"/>
</dbReference>
<dbReference type="Gene3D" id="3.40.50.800">
    <property type="entry name" value="Anticodon-binding domain"/>
    <property type="match status" value="1"/>
</dbReference>
<dbReference type="Gene3D" id="3.30.930.10">
    <property type="entry name" value="Bira Bifunctional Protein, Domain 2"/>
    <property type="match status" value="1"/>
</dbReference>
<dbReference type="Gene3D" id="3.30.110.30">
    <property type="entry name" value="C-terminal domain of ProRS"/>
    <property type="match status" value="1"/>
</dbReference>
<dbReference type="HAMAP" id="MF_01571">
    <property type="entry name" value="Pro_tRNA_synth_type3"/>
    <property type="match status" value="1"/>
</dbReference>
<dbReference type="InterPro" id="IPR002314">
    <property type="entry name" value="aa-tRNA-synt_IIb"/>
</dbReference>
<dbReference type="InterPro" id="IPR006195">
    <property type="entry name" value="aa-tRNA-synth_II"/>
</dbReference>
<dbReference type="InterPro" id="IPR045864">
    <property type="entry name" value="aa-tRNA-synth_II/BPL/LPL"/>
</dbReference>
<dbReference type="InterPro" id="IPR004154">
    <property type="entry name" value="Anticodon-bd"/>
</dbReference>
<dbReference type="InterPro" id="IPR036621">
    <property type="entry name" value="Anticodon-bd_dom_sf"/>
</dbReference>
<dbReference type="InterPro" id="IPR002316">
    <property type="entry name" value="Pro-tRNA-ligase_IIa"/>
</dbReference>
<dbReference type="InterPro" id="IPR004499">
    <property type="entry name" value="Pro-tRNA-ligase_IIa_arc-type"/>
</dbReference>
<dbReference type="InterPro" id="IPR016061">
    <property type="entry name" value="Pro-tRNA_ligase_II_C"/>
</dbReference>
<dbReference type="InterPro" id="IPR017449">
    <property type="entry name" value="Pro-tRNA_synth_II"/>
</dbReference>
<dbReference type="InterPro" id="IPR033721">
    <property type="entry name" value="ProRS_core_arch_euk"/>
</dbReference>
<dbReference type="NCBIfam" id="TIGR00408">
    <property type="entry name" value="proS_fam_I"/>
    <property type="match status" value="1"/>
</dbReference>
<dbReference type="PANTHER" id="PTHR43382:SF2">
    <property type="entry name" value="BIFUNCTIONAL GLUTAMATE_PROLINE--TRNA LIGASE"/>
    <property type="match status" value="1"/>
</dbReference>
<dbReference type="PANTHER" id="PTHR43382">
    <property type="entry name" value="PROLYL-TRNA SYNTHETASE"/>
    <property type="match status" value="1"/>
</dbReference>
<dbReference type="Pfam" id="PF03129">
    <property type="entry name" value="HGTP_anticodon"/>
    <property type="match status" value="1"/>
</dbReference>
<dbReference type="Pfam" id="PF09180">
    <property type="entry name" value="ProRS-C_1"/>
    <property type="match status" value="1"/>
</dbReference>
<dbReference type="Pfam" id="PF00587">
    <property type="entry name" value="tRNA-synt_2b"/>
    <property type="match status" value="1"/>
</dbReference>
<dbReference type="PRINTS" id="PR01046">
    <property type="entry name" value="TRNASYNTHPRO"/>
</dbReference>
<dbReference type="SMART" id="SM00946">
    <property type="entry name" value="ProRS-C_1"/>
    <property type="match status" value="1"/>
</dbReference>
<dbReference type="SUPFAM" id="SSF64586">
    <property type="entry name" value="C-terminal domain of ProRS"/>
    <property type="match status" value="1"/>
</dbReference>
<dbReference type="SUPFAM" id="SSF52954">
    <property type="entry name" value="Class II aaRS ABD-related"/>
    <property type="match status" value="1"/>
</dbReference>
<dbReference type="SUPFAM" id="SSF55681">
    <property type="entry name" value="Class II aaRS and biotin synthetases"/>
    <property type="match status" value="1"/>
</dbReference>
<dbReference type="PROSITE" id="PS50862">
    <property type="entry name" value="AA_TRNA_LIGASE_II"/>
    <property type="match status" value="1"/>
</dbReference>
<organism>
    <name type="scientific">Aeropyrum pernix (strain ATCC 700893 / DSM 11879 / JCM 9820 / NBRC 100138 / K1)</name>
    <dbReference type="NCBI Taxonomy" id="272557"/>
    <lineage>
        <taxon>Archaea</taxon>
        <taxon>Thermoproteota</taxon>
        <taxon>Thermoprotei</taxon>
        <taxon>Desulfurococcales</taxon>
        <taxon>Desulfurococcaceae</taxon>
        <taxon>Aeropyrum</taxon>
    </lineage>
</organism>
<protein>
    <recommendedName>
        <fullName evidence="1">Proline--tRNA ligase</fullName>
        <ecNumber evidence="1">6.1.1.15</ecNumber>
    </recommendedName>
    <alternativeName>
        <fullName evidence="1">Prolyl-tRNA synthetase</fullName>
        <shortName evidence="1">ProRS</shortName>
    </alternativeName>
</protein>
<comment type="function">
    <text evidence="1">Catalyzes the attachment of proline to tRNA(Pro) in a two-step reaction: proline is first activated by ATP to form Pro-AMP and then transferred to the acceptor end of tRNA(Pro).</text>
</comment>
<comment type="catalytic activity">
    <reaction evidence="1">
        <text>tRNA(Pro) + L-proline + ATP = L-prolyl-tRNA(Pro) + AMP + diphosphate</text>
        <dbReference type="Rhea" id="RHEA:14305"/>
        <dbReference type="Rhea" id="RHEA-COMP:9700"/>
        <dbReference type="Rhea" id="RHEA-COMP:9702"/>
        <dbReference type="ChEBI" id="CHEBI:30616"/>
        <dbReference type="ChEBI" id="CHEBI:33019"/>
        <dbReference type="ChEBI" id="CHEBI:60039"/>
        <dbReference type="ChEBI" id="CHEBI:78442"/>
        <dbReference type="ChEBI" id="CHEBI:78532"/>
        <dbReference type="ChEBI" id="CHEBI:456215"/>
        <dbReference type="EC" id="6.1.1.15"/>
    </reaction>
</comment>
<comment type="subunit">
    <text evidence="1">Homodimer.</text>
</comment>
<comment type="subcellular location">
    <subcellularLocation>
        <location evidence="1">Cytoplasm</location>
    </subcellularLocation>
</comment>
<comment type="domain">
    <text evidence="1">Consists of three domains: the N-terminal catalytic domain, the anticodon-binding domain and the C-terminal extension.</text>
</comment>
<comment type="similarity">
    <text evidence="1">Belongs to the class-II aminoacyl-tRNA synthetase family. ProS type 3 subfamily.</text>
</comment>
<feature type="chain" id="PRO_0000249155" description="Proline--tRNA ligase">
    <location>
        <begin position="1"/>
        <end position="485"/>
    </location>
</feature>
<gene>
    <name evidence="1" type="primary">proS</name>
    <name type="ordered locus">APE_2328</name>
</gene>
<reference key="1">
    <citation type="journal article" date="1999" name="DNA Res.">
        <title>Complete genome sequence of an aerobic hyper-thermophilic crenarchaeon, Aeropyrum pernix K1.</title>
        <authorList>
            <person name="Kawarabayasi Y."/>
            <person name="Hino Y."/>
            <person name="Horikawa H."/>
            <person name="Yamazaki S."/>
            <person name="Haikawa Y."/>
            <person name="Jin-no K."/>
            <person name="Takahashi M."/>
            <person name="Sekine M."/>
            <person name="Baba S."/>
            <person name="Ankai A."/>
            <person name="Kosugi H."/>
            <person name="Hosoyama A."/>
            <person name="Fukui S."/>
            <person name="Nagai Y."/>
            <person name="Nishijima K."/>
            <person name="Nakazawa H."/>
            <person name="Takamiya M."/>
            <person name="Masuda S."/>
            <person name="Funahashi T."/>
            <person name="Tanaka T."/>
            <person name="Kudoh Y."/>
            <person name="Yamazaki J."/>
            <person name="Kushida N."/>
            <person name="Oguchi A."/>
            <person name="Aoki K."/>
            <person name="Kubota K."/>
            <person name="Nakamura Y."/>
            <person name="Nomura N."/>
            <person name="Sako Y."/>
            <person name="Kikuchi H."/>
        </authorList>
    </citation>
    <scope>NUCLEOTIDE SEQUENCE [LARGE SCALE GENOMIC DNA]</scope>
    <source>
        <strain>ATCC 700893 / DSM 11879 / JCM 9820 / NBRC 100138 / K1</strain>
    </source>
</reference>
<accession>Q9Y9G0</accession>